<keyword id="KW-0053">Apoptosis</keyword>
<keyword id="KW-1015">Disulfide bond</keyword>
<keyword id="KW-0325">Glycoprotein</keyword>
<keyword id="KW-0675">Receptor</keyword>
<keyword id="KW-1185">Reference proteome</keyword>
<keyword id="KW-0677">Repeat</keyword>
<keyword id="KW-0964">Secreted</keyword>
<keyword id="KW-0732">Signal</keyword>
<name>TR11B_BOVIN</name>
<protein>
    <recommendedName>
        <fullName>Tumor necrosis factor receptor superfamily member 11B</fullName>
    </recommendedName>
    <alternativeName>
        <fullName>Osteoprotegerin</fullName>
    </alternativeName>
</protein>
<proteinExistence type="evidence at transcript level"/>
<feature type="signal peptide" evidence="1">
    <location>
        <begin position="1"/>
        <end position="21"/>
    </location>
</feature>
<feature type="chain" id="PRO_0000394512" description="Tumor necrosis factor receptor superfamily member 11B">
    <location>
        <begin position="22"/>
        <end position="402"/>
    </location>
</feature>
<feature type="repeat" description="TNFR-Cys 1">
    <location>
        <begin position="24"/>
        <end position="62"/>
    </location>
</feature>
<feature type="repeat" description="TNFR-Cys 2">
    <location>
        <begin position="64"/>
        <end position="105"/>
    </location>
</feature>
<feature type="repeat" description="TNFR-Cys 3">
    <location>
        <begin position="106"/>
        <end position="142"/>
    </location>
</feature>
<feature type="repeat" description="TNFR-Cys 4">
    <location>
        <begin position="144"/>
        <end position="185"/>
    </location>
</feature>
<feature type="domain" description="Death 1">
    <location>
        <begin position="198"/>
        <end position="269"/>
    </location>
</feature>
<feature type="domain" description="Death 2">
    <location>
        <begin position="270"/>
        <end position="365"/>
    </location>
</feature>
<feature type="site" description="Involved in dimerization" evidence="1">
    <location>
        <position position="401"/>
    </location>
</feature>
<feature type="glycosylation site" description="N-linked (GlcNAc...) asparagine" evidence="2">
    <location>
        <position position="165"/>
    </location>
</feature>
<feature type="glycosylation site" description="N-linked (GlcNAc...) asparagine" evidence="2">
    <location>
        <position position="178"/>
    </location>
</feature>
<feature type="disulfide bond" evidence="3">
    <location>
        <begin position="41"/>
        <end position="54"/>
    </location>
</feature>
<feature type="disulfide bond" evidence="3">
    <location>
        <begin position="44"/>
        <end position="62"/>
    </location>
</feature>
<feature type="disulfide bond" evidence="3">
    <location>
        <begin position="65"/>
        <end position="80"/>
    </location>
</feature>
<feature type="disulfide bond" evidence="3">
    <location>
        <begin position="83"/>
        <end position="97"/>
    </location>
</feature>
<feature type="disulfide bond" evidence="3">
    <location>
        <begin position="87"/>
        <end position="105"/>
    </location>
</feature>
<feature type="disulfide bond" evidence="3">
    <location>
        <begin position="107"/>
        <end position="118"/>
    </location>
</feature>
<feature type="disulfide bond" evidence="3">
    <location>
        <begin position="124"/>
        <end position="142"/>
    </location>
</feature>
<feature type="disulfide bond" evidence="3">
    <location>
        <begin position="145"/>
        <end position="160"/>
    </location>
</feature>
<feature type="disulfide bond" evidence="3">
    <location>
        <begin position="166"/>
        <end position="185"/>
    </location>
</feature>
<dbReference type="EMBL" id="BC140651">
    <property type="protein sequence ID" value="AAI40652.1"/>
    <property type="molecule type" value="mRNA"/>
</dbReference>
<dbReference type="RefSeq" id="NP_001091525.1">
    <property type="nucleotide sequence ID" value="NM_001098056.2"/>
</dbReference>
<dbReference type="SMR" id="A5D7R1"/>
<dbReference type="FunCoup" id="A5D7R1">
    <property type="interactions" value="225"/>
</dbReference>
<dbReference type="STRING" id="9913.ENSBTAP00000009759"/>
<dbReference type="GlyCosmos" id="A5D7R1">
    <property type="glycosylation" value="2 sites, No reported glycans"/>
</dbReference>
<dbReference type="GlyGen" id="A5D7R1">
    <property type="glycosylation" value="2 sites"/>
</dbReference>
<dbReference type="PaxDb" id="9913-ENSBTAP00000009759"/>
<dbReference type="Ensembl" id="ENSBTAT00000009759.6">
    <property type="protein sequence ID" value="ENSBTAP00000009759.5"/>
    <property type="gene ID" value="ENSBTAG00000007423.6"/>
</dbReference>
<dbReference type="GeneID" id="523822"/>
<dbReference type="KEGG" id="bta:523822"/>
<dbReference type="CTD" id="4982"/>
<dbReference type="VEuPathDB" id="HostDB:ENSBTAG00000007423"/>
<dbReference type="VGNC" id="VGNC:36161">
    <property type="gene designation" value="TNFRSF11B"/>
</dbReference>
<dbReference type="eggNOG" id="ENOG502QVRT">
    <property type="taxonomic scope" value="Eukaryota"/>
</dbReference>
<dbReference type="GeneTree" id="ENSGT00940000155167"/>
<dbReference type="HOGENOM" id="CLU_057708_0_0_1"/>
<dbReference type="InParanoid" id="A5D7R1"/>
<dbReference type="OMA" id="TICKRCP"/>
<dbReference type="OrthoDB" id="8710478at2759"/>
<dbReference type="TreeFam" id="TF331157"/>
<dbReference type="Reactome" id="R-BTA-5669034">
    <property type="pathway name" value="TNFs bind their physiological receptors"/>
</dbReference>
<dbReference type="Proteomes" id="UP000009136">
    <property type="component" value="Chromosome 14"/>
</dbReference>
<dbReference type="Bgee" id="ENSBTAG00000007423">
    <property type="expression patterns" value="Expressed in intramuscular adipose tissue and 79 other cell types or tissues"/>
</dbReference>
<dbReference type="GO" id="GO:0031012">
    <property type="term" value="C:extracellular matrix"/>
    <property type="evidence" value="ECO:0007669"/>
    <property type="project" value="Ensembl"/>
</dbReference>
<dbReference type="GO" id="GO:0005615">
    <property type="term" value="C:extracellular space"/>
    <property type="evidence" value="ECO:0007669"/>
    <property type="project" value="Ensembl"/>
</dbReference>
<dbReference type="GO" id="GO:0043235">
    <property type="term" value="C:receptor complex"/>
    <property type="evidence" value="ECO:0007669"/>
    <property type="project" value="Ensembl"/>
</dbReference>
<dbReference type="GO" id="GO:1904399">
    <property type="term" value="F:heparan sulfate binding"/>
    <property type="evidence" value="ECO:0007669"/>
    <property type="project" value="Ensembl"/>
</dbReference>
<dbReference type="GO" id="GO:0006915">
    <property type="term" value="P:apoptotic process"/>
    <property type="evidence" value="ECO:0007669"/>
    <property type="project" value="UniProtKB-KW"/>
</dbReference>
<dbReference type="GO" id="GO:0030198">
    <property type="term" value="P:extracellular matrix organization"/>
    <property type="evidence" value="ECO:0007669"/>
    <property type="project" value="Ensembl"/>
</dbReference>
<dbReference type="GO" id="GO:0042489">
    <property type="term" value="P:negative regulation of odontogenesis of dentin-containing tooth"/>
    <property type="evidence" value="ECO:0007669"/>
    <property type="project" value="Ensembl"/>
</dbReference>
<dbReference type="GO" id="GO:0045671">
    <property type="term" value="P:negative regulation of osteoclast differentiation"/>
    <property type="evidence" value="ECO:0007669"/>
    <property type="project" value="Ensembl"/>
</dbReference>
<dbReference type="GO" id="GO:0010804">
    <property type="term" value="P:negative regulation of tumor necrosis factor-mediated signaling pathway"/>
    <property type="evidence" value="ECO:0007669"/>
    <property type="project" value="Ensembl"/>
</dbReference>
<dbReference type="GO" id="GO:0007165">
    <property type="term" value="P:signal transduction"/>
    <property type="evidence" value="ECO:0007669"/>
    <property type="project" value="InterPro"/>
</dbReference>
<dbReference type="CDD" id="cd00185">
    <property type="entry name" value="TNFRSF"/>
    <property type="match status" value="1"/>
</dbReference>
<dbReference type="CDD" id="cd10581">
    <property type="entry name" value="TNFRSF11B"/>
    <property type="match status" value="1"/>
</dbReference>
<dbReference type="FunFam" id="1.10.533.10:FF:000066">
    <property type="entry name" value="Tumor necrosis factor receptor superfamily member 11B"/>
    <property type="match status" value="1"/>
</dbReference>
<dbReference type="FunFam" id="2.10.50.10:FF:000014">
    <property type="entry name" value="Tumor necrosis factor receptor superfamily member 11B"/>
    <property type="match status" value="1"/>
</dbReference>
<dbReference type="FunFam" id="2.10.50.10:FF:000030">
    <property type="entry name" value="Tumor necrosis factor receptor superfamily member 11B"/>
    <property type="match status" value="1"/>
</dbReference>
<dbReference type="Gene3D" id="1.10.533.10">
    <property type="entry name" value="Death Domain, Fas"/>
    <property type="match status" value="2"/>
</dbReference>
<dbReference type="Gene3D" id="2.10.50.10">
    <property type="entry name" value="Tumor Necrosis Factor Receptor, subunit A, domain 2"/>
    <property type="match status" value="4"/>
</dbReference>
<dbReference type="InterPro" id="IPR011029">
    <property type="entry name" value="DEATH-like_dom_sf"/>
</dbReference>
<dbReference type="InterPro" id="IPR000488">
    <property type="entry name" value="Death_dom"/>
</dbReference>
<dbReference type="InterPro" id="IPR001368">
    <property type="entry name" value="TNFR/NGFR_Cys_rich_reg"/>
</dbReference>
<dbReference type="InterPro" id="IPR022323">
    <property type="entry name" value="TNFR_11"/>
</dbReference>
<dbReference type="InterPro" id="IPR017371">
    <property type="entry name" value="TNFR_11B"/>
</dbReference>
<dbReference type="InterPro" id="IPR052459">
    <property type="entry name" value="TNFRSF_decoy_receptor"/>
</dbReference>
<dbReference type="PANTHER" id="PTHR23097">
    <property type="entry name" value="TUMOR NECROSIS FACTOR RECEPTOR SUPERFAMILY MEMBER"/>
    <property type="match status" value="1"/>
</dbReference>
<dbReference type="PANTHER" id="PTHR23097:SF90">
    <property type="entry name" value="TUMOR NECROSIS FACTOR RECEPTOR SUPERFAMILY MEMBER 11B"/>
    <property type="match status" value="1"/>
</dbReference>
<dbReference type="Pfam" id="PF23630">
    <property type="entry name" value="Death_TNFRSF11B"/>
    <property type="match status" value="2"/>
</dbReference>
<dbReference type="Pfam" id="PF00020">
    <property type="entry name" value="TNFR_c6"/>
    <property type="match status" value="4"/>
</dbReference>
<dbReference type="PIRSF" id="PIRSF038065">
    <property type="entry name" value="TNFR_11B"/>
    <property type="match status" value="1"/>
</dbReference>
<dbReference type="PRINTS" id="PR01961">
    <property type="entry name" value="TNFACTORR11"/>
</dbReference>
<dbReference type="PRINTS" id="PR01975">
    <property type="entry name" value="TNFACTORR11B"/>
</dbReference>
<dbReference type="SMART" id="SM00005">
    <property type="entry name" value="DEATH"/>
    <property type="match status" value="1"/>
</dbReference>
<dbReference type="SMART" id="SM01411">
    <property type="entry name" value="Ephrin_rec_like"/>
    <property type="match status" value="2"/>
</dbReference>
<dbReference type="SMART" id="SM00208">
    <property type="entry name" value="TNFR"/>
    <property type="match status" value="4"/>
</dbReference>
<dbReference type="SUPFAM" id="SSF47986">
    <property type="entry name" value="DEATH domain"/>
    <property type="match status" value="2"/>
</dbReference>
<dbReference type="SUPFAM" id="SSF57586">
    <property type="entry name" value="TNF receptor-like"/>
    <property type="match status" value="2"/>
</dbReference>
<dbReference type="PROSITE" id="PS00652">
    <property type="entry name" value="TNFR_NGFR_1"/>
    <property type="match status" value="1"/>
</dbReference>
<dbReference type="PROSITE" id="PS50050">
    <property type="entry name" value="TNFR_NGFR_2"/>
    <property type="match status" value="2"/>
</dbReference>
<evidence type="ECO:0000250" key="1"/>
<evidence type="ECO:0000255" key="2"/>
<evidence type="ECO:0000255" key="3">
    <source>
        <dbReference type="PROSITE-ProRule" id="PRU00206"/>
    </source>
</evidence>
<gene>
    <name type="primary">TNFRSF11B</name>
</gene>
<organism>
    <name type="scientific">Bos taurus</name>
    <name type="common">Bovine</name>
    <dbReference type="NCBI Taxonomy" id="9913"/>
    <lineage>
        <taxon>Eukaryota</taxon>
        <taxon>Metazoa</taxon>
        <taxon>Chordata</taxon>
        <taxon>Craniata</taxon>
        <taxon>Vertebrata</taxon>
        <taxon>Euteleostomi</taxon>
        <taxon>Mammalia</taxon>
        <taxon>Eutheria</taxon>
        <taxon>Laurasiatheria</taxon>
        <taxon>Artiodactyla</taxon>
        <taxon>Ruminantia</taxon>
        <taxon>Pecora</taxon>
        <taxon>Bovidae</taxon>
        <taxon>Bovinae</taxon>
        <taxon>Bos</taxon>
    </lineage>
</organism>
<reference key="1">
    <citation type="submission" date="2007-04" db="EMBL/GenBank/DDBJ databases">
        <authorList>
            <consortium name="NIH - Mammalian Gene Collection (MGC) project"/>
        </authorList>
    </citation>
    <scope>NUCLEOTIDE SEQUENCE [LARGE SCALE MRNA]</scope>
    <source>
        <strain>Hereford</strain>
        <tissue>Fetal liver</tissue>
    </source>
</reference>
<accession>A5D7R1</accession>
<sequence>MNKLLCCALVFLDISIKWTTQETFPPKYLHYDPESSRQLMCDKCPPGTFLKQPCTARRKTVCAPCPDHYYTDTWHTSDECLYCSPVCKELQYVKQECSRTHNRVCECEEGRYLELEFCLKHRSCPPGFGVLHPGTPERNTVCKRCPDGFFSNETSSKAPCRKHTNCSAFGLLLTQKGNATHDNICSGSSESSTHKCGIDMTLCEEAFFRFAVPTKLTPNWLSVLVDNLPGTKVNAESIERIKQRHNSREQTFQLLKLWKHQNKDQDMVKKIIQDIDLCENSVRRHIGHLNLTFEQLLKLMESLPGKKVTTEDVEKTVKTCKSSEQLLKLLSLWRIKNGDQDTRKGLLHALKHLKTYHFPKTVIQSLKKTIRFLHSFTMYRLYRKLFLEMIGNQVQSLKISCL</sequence>
<comment type="function">
    <text evidence="1">Acts as a decoy receptor for TNFSF11/RANKL and thereby neutralizes its function in osteoclastogenesis. Inhibits the activation of osteoclasts and promotes osteoclast apoptosis. Bone homeostasis seems to depend on the local ratio between TNFSF11 and TNFRSF11B. May also play a role in preventing arterial calcification. May act as decoy receptor for TNFSF10/TRAIL and protect against apoptosis. TNFSF10/TRAIL binding blocks the inhibition of osteoclastogenesis (By similarity).</text>
</comment>
<comment type="subunit">
    <text evidence="1">Homodimer. Interacts with TNFSF10 and TNFSF11 (By similarity).</text>
</comment>
<comment type="subcellular location">
    <subcellularLocation>
        <location evidence="1">Secreted</location>
    </subcellularLocation>
</comment>
<comment type="PTM">
    <text evidence="1">N-glycosylated. Contains sialic acid residues (By similarity).</text>
</comment>